<protein>
    <recommendedName>
        <fullName evidence="1">Porphobilinogen deaminase</fullName>
        <shortName evidence="1">PBG</shortName>
        <ecNumber evidence="1">2.5.1.61</ecNumber>
    </recommendedName>
    <alternativeName>
        <fullName evidence="1">Hydroxymethylbilane synthase</fullName>
        <shortName evidence="1">HMBS</shortName>
    </alternativeName>
    <alternativeName>
        <fullName evidence="1">Pre-uroporphyrinogen synthase</fullName>
    </alternativeName>
</protein>
<comment type="function">
    <text evidence="1">Tetrapolymerization of the monopyrrole PBG into the hydroxymethylbilane pre-uroporphyrinogen in several discrete steps.</text>
</comment>
<comment type="catalytic activity">
    <reaction evidence="1">
        <text>4 porphobilinogen + H2O = hydroxymethylbilane + 4 NH4(+)</text>
        <dbReference type="Rhea" id="RHEA:13185"/>
        <dbReference type="ChEBI" id="CHEBI:15377"/>
        <dbReference type="ChEBI" id="CHEBI:28938"/>
        <dbReference type="ChEBI" id="CHEBI:57845"/>
        <dbReference type="ChEBI" id="CHEBI:58126"/>
        <dbReference type="EC" id="2.5.1.61"/>
    </reaction>
</comment>
<comment type="cofactor">
    <cofactor evidence="1">
        <name>dipyrromethane</name>
        <dbReference type="ChEBI" id="CHEBI:60342"/>
    </cofactor>
    <text evidence="1">Binds 1 dipyrromethane group covalently.</text>
</comment>
<comment type="pathway">
    <text evidence="1">Porphyrin-containing compound metabolism; protoporphyrin-IX biosynthesis; coproporphyrinogen-III from 5-aminolevulinate: step 2/4.</text>
</comment>
<comment type="subunit">
    <text evidence="1">Monomer.</text>
</comment>
<comment type="miscellaneous">
    <text evidence="1">The porphobilinogen subunits are added to the dipyrromethane group.</text>
</comment>
<comment type="similarity">
    <text evidence="1">Belongs to the HMBS family.</text>
</comment>
<accession>A1V5U0</accession>
<sequence length="329" mass="34409">MNSETLPAELPATLTIASRESRLAMWQAEHVRDALRKLYPACDVKILGMTTRGDQILDRTLSKVGGKGLFVKELESALADGRADLAVHSLKDVPMALPEGFALAAVMSREDPRDAFVSNDYASLDALPAGAVVGTSSLRREAMLRARHPRLDVRPLRGNLDTRLAKLDRGDYAAIILAAAGLKRLGLAARIRALLDVDDSLPAAGQGALGIEIAARRADVAAWLAPLHDHASALAVEAERAVSRALGGSCEVPLAAHAVWRGGELHLTGSVSTTDGARVLAAHAHARAATAADALALGRRVSDALERQGARAIVDALVAASAQAQKGGA</sequence>
<name>HEM3_BURMS</name>
<proteinExistence type="inferred from homology"/>
<evidence type="ECO:0000255" key="1">
    <source>
        <dbReference type="HAMAP-Rule" id="MF_00260"/>
    </source>
</evidence>
<gene>
    <name evidence="1" type="primary">hemC</name>
    <name type="ordered locus">BMASAVP1_A2284</name>
</gene>
<keyword id="KW-0627">Porphyrin biosynthesis</keyword>
<keyword id="KW-0808">Transferase</keyword>
<dbReference type="EC" id="2.5.1.61" evidence="1"/>
<dbReference type="EMBL" id="CP000526">
    <property type="protein sequence ID" value="ABM52021.1"/>
    <property type="molecule type" value="Genomic_DNA"/>
</dbReference>
<dbReference type="RefSeq" id="WP_004193185.1">
    <property type="nucleotide sequence ID" value="NC_008785.1"/>
</dbReference>
<dbReference type="SMR" id="A1V5U0"/>
<dbReference type="GeneID" id="93059515"/>
<dbReference type="KEGG" id="bmv:BMASAVP1_A2284"/>
<dbReference type="HOGENOM" id="CLU_019704_0_2_4"/>
<dbReference type="UniPathway" id="UPA00251">
    <property type="reaction ID" value="UER00319"/>
</dbReference>
<dbReference type="GO" id="GO:0005737">
    <property type="term" value="C:cytoplasm"/>
    <property type="evidence" value="ECO:0007669"/>
    <property type="project" value="TreeGrafter"/>
</dbReference>
<dbReference type="GO" id="GO:0004418">
    <property type="term" value="F:hydroxymethylbilane synthase activity"/>
    <property type="evidence" value="ECO:0007669"/>
    <property type="project" value="UniProtKB-UniRule"/>
</dbReference>
<dbReference type="GO" id="GO:0006782">
    <property type="term" value="P:protoporphyrinogen IX biosynthetic process"/>
    <property type="evidence" value="ECO:0007669"/>
    <property type="project" value="UniProtKB-UniRule"/>
</dbReference>
<dbReference type="CDD" id="cd13646">
    <property type="entry name" value="PBP2_EcHMBS_like"/>
    <property type="match status" value="1"/>
</dbReference>
<dbReference type="FunFam" id="3.40.190.10:FF:000004">
    <property type="entry name" value="Porphobilinogen deaminase"/>
    <property type="match status" value="1"/>
</dbReference>
<dbReference type="FunFam" id="3.40.190.10:FF:000005">
    <property type="entry name" value="Porphobilinogen deaminase"/>
    <property type="match status" value="1"/>
</dbReference>
<dbReference type="Gene3D" id="3.40.190.10">
    <property type="entry name" value="Periplasmic binding protein-like II"/>
    <property type="match status" value="2"/>
</dbReference>
<dbReference type="Gene3D" id="3.30.160.40">
    <property type="entry name" value="Porphobilinogen deaminase, C-terminal domain"/>
    <property type="match status" value="1"/>
</dbReference>
<dbReference type="HAMAP" id="MF_00260">
    <property type="entry name" value="Porphobil_deam"/>
    <property type="match status" value="1"/>
</dbReference>
<dbReference type="InterPro" id="IPR000860">
    <property type="entry name" value="HemC"/>
</dbReference>
<dbReference type="InterPro" id="IPR022419">
    <property type="entry name" value="Porphobilin_deaminase_cofac_BS"/>
</dbReference>
<dbReference type="InterPro" id="IPR022417">
    <property type="entry name" value="Porphobilin_deaminase_N"/>
</dbReference>
<dbReference type="InterPro" id="IPR022418">
    <property type="entry name" value="Porphobilinogen_deaminase_C"/>
</dbReference>
<dbReference type="InterPro" id="IPR036803">
    <property type="entry name" value="Porphobilinogen_deaminase_C_sf"/>
</dbReference>
<dbReference type="NCBIfam" id="TIGR00212">
    <property type="entry name" value="hemC"/>
    <property type="match status" value="1"/>
</dbReference>
<dbReference type="PANTHER" id="PTHR11557">
    <property type="entry name" value="PORPHOBILINOGEN DEAMINASE"/>
    <property type="match status" value="1"/>
</dbReference>
<dbReference type="PANTHER" id="PTHR11557:SF0">
    <property type="entry name" value="PORPHOBILINOGEN DEAMINASE"/>
    <property type="match status" value="1"/>
</dbReference>
<dbReference type="Pfam" id="PF01379">
    <property type="entry name" value="Porphobil_deam"/>
    <property type="match status" value="1"/>
</dbReference>
<dbReference type="Pfam" id="PF03900">
    <property type="entry name" value="Porphobil_deamC"/>
    <property type="match status" value="1"/>
</dbReference>
<dbReference type="PIRSF" id="PIRSF001438">
    <property type="entry name" value="4pyrrol_synth_OHMeBilane_synth"/>
    <property type="match status" value="1"/>
</dbReference>
<dbReference type="PRINTS" id="PR00151">
    <property type="entry name" value="PORPHBDMNASE"/>
</dbReference>
<dbReference type="SUPFAM" id="SSF53850">
    <property type="entry name" value="Periplasmic binding protein-like II"/>
    <property type="match status" value="1"/>
</dbReference>
<dbReference type="SUPFAM" id="SSF54782">
    <property type="entry name" value="Porphobilinogen deaminase (hydroxymethylbilane synthase), C-terminal domain"/>
    <property type="match status" value="1"/>
</dbReference>
<dbReference type="PROSITE" id="PS00533">
    <property type="entry name" value="PORPHOBILINOGEN_DEAM"/>
    <property type="match status" value="1"/>
</dbReference>
<feature type="chain" id="PRO_1000047739" description="Porphobilinogen deaminase">
    <location>
        <begin position="1"/>
        <end position="329"/>
    </location>
</feature>
<feature type="modified residue" description="S-(dipyrrolylmethanemethyl)cysteine" evidence="1">
    <location>
        <position position="250"/>
    </location>
</feature>
<organism>
    <name type="scientific">Burkholderia mallei (strain SAVP1)</name>
    <dbReference type="NCBI Taxonomy" id="320388"/>
    <lineage>
        <taxon>Bacteria</taxon>
        <taxon>Pseudomonadati</taxon>
        <taxon>Pseudomonadota</taxon>
        <taxon>Betaproteobacteria</taxon>
        <taxon>Burkholderiales</taxon>
        <taxon>Burkholderiaceae</taxon>
        <taxon>Burkholderia</taxon>
        <taxon>pseudomallei group</taxon>
    </lineage>
</organism>
<reference key="1">
    <citation type="journal article" date="2010" name="Genome Biol. Evol.">
        <title>Continuing evolution of Burkholderia mallei through genome reduction and large-scale rearrangements.</title>
        <authorList>
            <person name="Losada L."/>
            <person name="Ronning C.M."/>
            <person name="DeShazer D."/>
            <person name="Woods D."/>
            <person name="Fedorova N."/>
            <person name="Kim H.S."/>
            <person name="Shabalina S.A."/>
            <person name="Pearson T.R."/>
            <person name="Brinkac L."/>
            <person name="Tan P."/>
            <person name="Nandi T."/>
            <person name="Crabtree J."/>
            <person name="Badger J."/>
            <person name="Beckstrom-Sternberg S."/>
            <person name="Saqib M."/>
            <person name="Schutzer S.E."/>
            <person name="Keim P."/>
            <person name="Nierman W.C."/>
        </authorList>
    </citation>
    <scope>NUCLEOTIDE SEQUENCE [LARGE SCALE GENOMIC DNA]</scope>
    <source>
        <strain>SAVP1</strain>
    </source>
</reference>